<name>RS4_OPITP</name>
<keyword id="KW-1185">Reference proteome</keyword>
<keyword id="KW-0687">Ribonucleoprotein</keyword>
<keyword id="KW-0689">Ribosomal protein</keyword>
<keyword id="KW-0694">RNA-binding</keyword>
<keyword id="KW-0699">rRNA-binding</keyword>
<sequence length="203" mass="23398">MARYTGPTTRVSRRFGQQILGSGKAFERRSYPPGQHGPKLRRKVSEYAVGLNEKQKLRYIYGLLERQFRRVFEIAKKERGVTGERFLQLLETRLDSVVYLLGLAKSRAAARQFVNHGHIRVNGHKVDIASYNVKAGDEIEVKNSPASRQLATRCLEENRIRNVPGWLSMNAETFKATVNRLPTRDEMEQGINEQLIVEFYSRF</sequence>
<dbReference type="EMBL" id="CP001032">
    <property type="protein sequence ID" value="ACB73493.1"/>
    <property type="molecule type" value="Genomic_DNA"/>
</dbReference>
<dbReference type="RefSeq" id="WP_012373031.1">
    <property type="nucleotide sequence ID" value="NC_010571.1"/>
</dbReference>
<dbReference type="SMR" id="B1ZNC4"/>
<dbReference type="STRING" id="452637.Oter_0202"/>
<dbReference type="KEGG" id="ote:Oter_0202"/>
<dbReference type="eggNOG" id="COG0522">
    <property type="taxonomic scope" value="Bacteria"/>
</dbReference>
<dbReference type="HOGENOM" id="CLU_092403_0_1_0"/>
<dbReference type="OrthoDB" id="9803672at2"/>
<dbReference type="Proteomes" id="UP000007013">
    <property type="component" value="Chromosome"/>
</dbReference>
<dbReference type="GO" id="GO:0015935">
    <property type="term" value="C:small ribosomal subunit"/>
    <property type="evidence" value="ECO:0007669"/>
    <property type="project" value="InterPro"/>
</dbReference>
<dbReference type="GO" id="GO:0019843">
    <property type="term" value="F:rRNA binding"/>
    <property type="evidence" value="ECO:0007669"/>
    <property type="project" value="UniProtKB-UniRule"/>
</dbReference>
<dbReference type="GO" id="GO:0003735">
    <property type="term" value="F:structural constituent of ribosome"/>
    <property type="evidence" value="ECO:0007669"/>
    <property type="project" value="InterPro"/>
</dbReference>
<dbReference type="GO" id="GO:0042274">
    <property type="term" value="P:ribosomal small subunit biogenesis"/>
    <property type="evidence" value="ECO:0007669"/>
    <property type="project" value="TreeGrafter"/>
</dbReference>
<dbReference type="GO" id="GO:0006412">
    <property type="term" value="P:translation"/>
    <property type="evidence" value="ECO:0007669"/>
    <property type="project" value="UniProtKB-UniRule"/>
</dbReference>
<dbReference type="CDD" id="cd00165">
    <property type="entry name" value="S4"/>
    <property type="match status" value="1"/>
</dbReference>
<dbReference type="FunFam" id="3.10.290.10:FF:000001">
    <property type="entry name" value="30S ribosomal protein S4"/>
    <property type="match status" value="1"/>
</dbReference>
<dbReference type="Gene3D" id="1.10.1050.10">
    <property type="entry name" value="Ribosomal Protein S4 Delta 41, Chain A, domain 1"/>
    <property type="match status" value="1"/>
</dbReference>
<dbReference type="Gene3D" id="3.10.290.10">
    <property type="entry name" value="RNA-binding S4 domain"/>
    <property type="match status" value="1"/>
</dbReference>
<dbReference type="HAMAP" id="MF_01306_B">
    <property type="entry name" value="Ribosomal_uS4_B"/>
    <property type="match status" value="1"/>
</dbReference>
<dbReference type="InterPro" id="IPR022801">
    <property type="entry name" value="Ribosomal_uS4"/>
</dbReference>
<dbReference type="InterPro" id="IPR005709">
    <property type="entry name" value="Ribosomal_uS4_bac-type"/>
</dbReference>
<dbReference type="InterPro" id="IPR001912">
    <property type="entry name" value="Ribosomal_uS4_N"/>
</dbReference>
<dbReference type="InterPro" id="IPR002942">
    <property type="entry name" value="S4_RNA-bd"/>
</dbReference>
<dbReference type="InterPro" id="IPR036986">
    <property type="entry name" value="S4_RNA-bd_sf"/>
</dbReference>
<dbReference type="NCBIfam" id="NF003717">
    <property type="entry name" value="PRK05327.1"/>
    <property type="match status" value="1"/>
</dbReference>
<dbReference type="NCBIfam" id="TIGR01017">
    <property type="entry name" value="rpsD_bact"/>
    <property type="match status" value="1"/>
</dbReference>
<dbReference type="PANTHER" id="PTHR11831">
    <property type="entry name" value="30S 40S RIBOSOMAL PROTEIN"/>
    <property type="match status" value="1"/>
</dbReference>
<dbReference type="PANTHER" id="PTHR11831:SF4">
    <property type="entry name" value="SMALL RIBOSOMAL SUBUNIT PROTEIN US4M"/>
    <property type="match status" value="1"/>
</dbReference>
<dbReference type="Pfam" id="PF00163">
    <property type="entry name" value="Ribosomal_S4"/>
    <property type="match status" value="1"/>
</dbReference>
<dbReference type="Pfam" id="PF01479">
    <property type="entry name" value="S4"/>
    <property type="match status" value="1"/>
</dbReference>
<dbReference type="SMART" id="SM01390">
    <property type="entry name" value="Ribosomal_S4"/>
    <property type="match status" value="1"/>
</dbReference>
<dbReference type="SMART" id="SM00363">
    <property type="entry name" value="S4"/>
    <property type="match status" value="1"/>
</dbReference>
<dbReference type="SUPFAM" id="SSF55174">
    <property type="entry name" value="Alpha-L RNA-binding motif"/>
    <property type="match status" value="1"/>
</dbReference>
<dbReference type="PROSITE" id="PS50889">
    <property type="entry name" value="S4"/>
    <property type="match status" value="1"/>
</dbReference>
<accession>B1ZNC4</accession>
<reference key="1">
    <citation type="journal article" date="2011" name="J. Bacteriol.">
        <title>Genome sequence of the verrucomicrobium Opitutus terrae PB90-1, an abundant inhabitant of rice paddy soil ecosystems.</title>
        <authorList>
            <person name="van Passel M.W."/>
            <person name="Kant R."/>
            <person name="Palva A."/>
            <person name="Copeland A."/>
            <person name="Lucas S."/>
            <person name="Lapidus A."/>
            <person name="Glavina del Rio T."/>
            <person name="Pitluck S."/>
            <person name="Goltsman E."/>
            <person name="Clum A."/>
            <person name="Sun H."/>
            <person name="Schmutz J."/>
            <person name="Larimer F.W."/>
            <person name="Land M.L."/>
            <person name="Hauser L."/>
            <person name="Kyrpides N."/>
            <person name="Mikhailova N."/>
            <person name="Richardson P.P."/>
            <person name="Janssen P.H."/>
            <person name="de Vos W.M."/>
            <person name="Smidt H."/>
        </authorList>
    </citation>
    <scope>NUCLEOTIDE SEQUENCE [LARGE SCALE GENOMIC DNA]</scope>
    <source>
        <strain>DSM 11246 / JCM 15787 / PB90-1</strain>
    </source>
</reference>
<gene>
    <name evidence="1" type="primary">rpsD</name>
    <name type="ordered locus">Oter_0202</name>
</gene>
<comment type="function">
    <text evidence="1">One of the primary rRNA binding proteins, it binds directly to 16S rRNA where it nucleates assembly of the body of the 30S subunit.</text>
</comment>
<comment type="function">
    <text evidence="1">With S5 and S12 plays an important role in translational accuracy.</text>
</comment>
<comment type="subunit">
    <text evidence="1">Part of the 30S ribosomal subunit. Contacts protein S5. The interaction surface between S4 and S5 is involved in control of translational fidelity.</text>
</comment>
<comment type="similarity">
    <text evidence="1">Belongs to the universal ribosomal protein uS4 family.</text>
</comment>
<feature type="chain" id="PRO_1000140767" description="Small ribosomal subunit protein uS4">
    <location>
        <begin position="1"/>
        <end position="203"/>
    </location>
</feature>
<feature type="domain" description="S4 RNA-binding" evidence="1">
    <location>
        <begin position="92"/>
        <end position="164"/>
    </location>
</feature>
<proteinExistence type="inferred from homology"/>
<protein>
    <recommendedName>
        <fullName evidence="1">Small ribosomal subunit protein uS4</fullName>
    </recommendedName>
    <alternativeName>
        <fullName evidence="2">30S ribosomal protein S4</fullName>
    </alternativeName>
</protein>
<evidence type="ECO:0000255" key="1">
    <source>
        <dbReference type="HAMAP-Rule" id="MF_01306"/>
    </source>
</evidence>
<evidence type="ECO:0000305" key="2"/>
<organism>
    <name type="scientific">Opitutus terrae (strain DSM 11246 / JCM 15787 / PB90-1)</name>
    <dbReference type="NCBI Taxonomy" id="452637"/>
    <lineage>
        <taxon>Bacteria</taxon>
        <taxon>Pseudomonadati</taxon>
        <taxon>Verrucomicrobiota</taxon>
        <taxon>Opitutia</taxon>
        <taxon>Opitutales</taxon>
        <taxon>Opitutaceae</taxon>
        <taxon>Opitutus</taxon>
    </lineage>
</organism>